<feature type="chain" id="PRO_1000128768" description="Large ribosomal subunit protein bL27">
    <location>
        <begin position="1"/>
        <end position="85"/>
    </location>
</feature>
<feature type="region of interest" description="Disordered" evidence="2">
    <location>
        <begin position="1"/>
        <end position="21"/>
    </location>
</feature>
<feature type="compositionally biased region" description="Gly residues" evidence="2">
    <location>
        <begin position="1"/>
        <end position="10"/>
    </location>
</feature>
<organism>
    <name type="scientific">Leptothrix cholodnii (strain ATCC 51168 / LMG 8142 / SP-6)</name>
    <name type="common">Leptothrix discophora (strain SP-6)</name>
    <dbReference type="NCBI Taxonomy" id="395495"/>
    <lineage>
        <taxon>Bacteria</taxon>
        <taxon>Pseudomonadati</taxon>
        <taxon>Pseudomonadota</taxon>
        <taxon>Betaproteobacteria</taxon>
        <taxon>Burkholderiales</taxon>
        <taxon>Sphaerotilaceae</taxon>
        <taxon>Leptothrix</taxon>
    </lineage>
</organism>
<evidence type="ECO:0000255" key="1">
    <source>
        <dbReference type="HAMAP-Rule" id="MF_00539"/>
    </source>
</evidence>
<evidence type="ECO:0000256" key="2">
    <source>
        <dbReference type="SAM" id="MobiDB-lite"/>
    </source>
</evidence>
<evidence type="ECO:0000305" key="3"/>
<sequence length="85" mass="8967">MAQKKGGGSTRNGRDSQPKMLGVKAYGGQMVSAGSIIVRQRGTRFHAGTNVGMGRDHTLFALVDGTISFDVKGASNRKTVFVTPV</sequence>
<accession>B1Y281</accession>
<proteinExistence type="inferred from homology"/>
<name>RL27_LEPCP</name>
<reference key="1">
    <citation type="submission" date="2008-03" db="EMBL/GenBank/DDBJ databases">
        <title>Complete sequence of Leptothrix cholodnii SP-6.</title>
        <authorList>
            <consortium name="US DOE Joint Genome Institute"/>
            <person name="Copeland A."/>
            <person name="Lucas S."/>
            <person name="Lapidus A."/>
            <person name="Glavina del Rio T."/>
            <person name="Dalin E."/>
            <person name="Tice H."/>
            <person name="Bruce D."/>
            <person name="Goodwin L."/>
            <person name="Pitluck S."/>
            <person name="Chertkov O."/>
            <person name="Brettin T."/>
            <person name="Detter J.C."/>
            <person name="Han C."/>
            <person name="Kuske C.R."/>
            <person name="Schmutz J."/>
            <person name="Larimer F."/>
            <person name="Land M."/>
            <person name="Hauser L."/>
            <person name="Kyrpides N."/>
            <person name="Lykidis A."/>
            <person name="Emerson D."/>
            <person name="Richardson P."/>
        </authorList>
    </citation>
    <scope>NUCLEOTIDE SEQUENCE [LARGE SCALE GENOMIC DNA]</scope>
    <source>
        <strain>ATCC 51168 / LMG 8142 / SP-6</strain>
    </source>
</reference>
<gene>
    <name evidence="1" type="primary">rpmA</name>
    <name type="ordered locus">Lcho_3276</name>
</gene>
<keyword id="KW-1185">Reference proteome</keyword>
<keyword id="KW-0687">Ribonucleoprotein</keyword>
<keyword id="KW-0689">Ribosomal protein</keyword>
<comment type="similarity">
    <text evidence="1">Belongs to the bacterial ribosomal protein bL27 family.</text>
</comment>
<dbReference type="EMBL" id="CP001013">
    <property type="protein sequence ID" value="ACB35534.1"/>
    <property type="molecule type" value="Genomic_DNA"/>
</dbReference>
<dbReference type="RefSeq" id="WP_012348281.1">
    <property type="nucleotide sequence ID" value="NC_010524.1"/>
</dbReference>
<dbReference type="SMR" id="B1Y281"/>
<dbReference type="STRING" id="395495.Lcho_3276"/>
<dbReference type="KEGG" id="lch:Lcho_3276"/>
<dbReference type="eggNOG" id="COG0211">
    <property type="taxonomic scope" value="Bacteria"/>
</dbReference>
<dbReference type="HOGENOM" id="CLU_095424_4_1_4"/>
<dbReference type="OrthoDB" id="9803474at2"/>
<dbReference type="Proteomes" id="UP000001693">
    <property type="component" value="Chromosome"/>
</dbReference>
<dbReference type="GO" id="GO:0022625">
    <property type="term" value="C:cytosolic large ribosomal subunit"/>
    <property type="evidence" value="ECO:0007669"/>
    <property type="project" value="TreeGrafter"/>
</dbReference>
<dbReference type="GO" id="GO:0003735">
    <property type="term" value="F:structural constituent of ribosome"/>
    <property type="evidence" value="ECO:0007669"/>
    <property type="project" value="InterPro"/>
</dbReference>
<dbReference type="GO" id="GO:0006412">
    <property type="term" value="P:translation"/>
    <property type="evidence" value="ECO:0007669"/>
    <property type="project" value="UniProtKB-UniRule"/>
</dbReference>
<dbReference type="FunFam" id="2.40.50.100:FF:000001">
    <property type="entry name" value="50S ribosomal protein L27"/>
    <property type="match status" value="1"/>
</dbReference>
<dbReference type="Gene3D" id="2.40.50.100">
    <property type="match status" value="1"/>
</dbReference>
<dbReference type="HAMAP" id="MF_00539">
    <property type="entry name" value="Ribosomal_bL27"/>
    <property type="match status" value="1"/>
</dbReference>
<dbReference type="InterPro" id="IPR001684">
    <property type="entry name" value="Ribosomal_bL27"/>
</dbReference>
<dbReference type="InterPro" id="IPR018261">
    <property type="entry name" value="Ribosomal_bL27_CS"/>
</dbReference>
<dbReference type="NCBIfam" id="TIGR00062">
    <property type="entry name" value="L27"/>
    <property type="match status" value="1"/>
</dbReference>
<dbReference type="PANTHER" id="PTHR15893:SF0">
    <property type="entry name" value="LARGE RIBOSOMAL SUBUNIT PROTEIN BL27M"/>
    <property type="match status" value="1"/>
</dbReference>
<dbReference type="PANTHER" id="PTHR15893">
    <property type="entry name" value="RIBOSOMAL PROTEIN L27"/>
    <property type="match status" value="1"/>
</dbReference>
<dbReference type="Pfam" id="PF01016">
    <property type="entry name" value="Ribosomal_L27"/>
    <property type="match status" value="1"/>
</dbReference>
<dbReference type="PRINTS" id="PR00063">
    <property type="entry name" value="RIBOSOMALL27"/>
</dbReference>
<dbReference type="SUPFAM" id="SSF110324">
    <property type="entry name" value="Ribosomal L27 protein-like"/>
    <property type="match status" value="1"/>
</dbReference>
<dbReference type="PROSITE" id="PS00831">
    <property type="entry name" value="RIBOSOMAL_L27"/>
    <property type="match status" value="1"/>
</dbReference>
<protein>
    <recommendedName>
        <fullName evidence="1">Large ribosomal subunit protein bL27</fullName>
    </recommendedName>
    <alternativeName>
        <fullName evidence="3">50S ribosomal protein L27</fullName>
    </alternativeName>
</protein>